<gene>
    <name type="primary">MT-CYB</name>
    <name type="synonym">COB</name>
    <name type="synonym">CYTB</name>
    <name type="synonym">MTCYB</name>
</gene>
<accession>O48098</accession>
<proteinExistence type="inferred from homology"/>
<reference key="1">
    <citation type="thesis" date="1997" institute="Queen's University / Kingston" country="Canada">
        <title>Hic Sunt Serpentes -- molecular phylogenetics and the Boidae (Serpentes: Booidea).</title>
        <authorList>
            <person name="Campbell B.N."/>
        </authorList>
    </citation>
    <scope>NUCLEOTIDE SEQUENCE [GENOMIC DNA]</scope>
</reference>
<name>CYB_APOPP</name>
<evidence type="ECO:0000250" key="1"/>
<evidence type="ECO:0000250" key="2">
    <source>
        <dbReference type="UniProtKB" id="P00157"/>
    </source>
</evidence>
<evidence type="ECO:0000255" key="3">
    <source>
        <dbReference type="PROSITE-ProRule" id="PRU00967"/>
    </source>
</evidence>
<evidence type="ECO:0000255" key="4">
    <source>
        <dbReference type="PROSITE-ProRule" id="PRU00968"/>
    </source>
</evidence>
<organism>
    <name type="scientific">Apodora papuana</name>
    <name type="common">Papuan olive python</name>
    <name type="synonym">Liasis papuanus</name>
    <dbReference type="NCBI Taxonomy" id="129310"/>
    <lineage>
        <taxon>Eukaryota</taxon>
        <taxon>Metazoa</taxon>
        <taxon>Chordata</taxon>
        <taxon>Craniata</taxon>
        <taxon>Vertebrata</taxon>
        <taxon>Euteleostomi</taxon>
        <taxon>Lepidosauria</taxon>
        <taxon>Squamata</taxon>
        <taxon>Bifurcata</taxon>
        <taxon>Unidentata</taxon>
        <taxon>Episquamata</taxon>
        <taxon>Toxicofera</taxon>
        <taxon>Serpentes</taxon>
        <taxon>Henophidia</taxon>
        <taxon>Pythonidae</taxon>
        <taxon>Liasis</taxon>
    </lineage>
</organism>
<geneLocation type="mitochondrion"/>
<feature type="chain" id="PRO_0000061123" description="Cytochrome b">
    <location>
        <begin position="1"/>
        <end position="371"/>
    </location>
</feature>
<feature type="transmembrane region" description="Helical" evidence="2">
    <location>
        <begin position="25"/>
        <end position="45"/>
    </location>
</feature>
<feature type="transmembrane region" description="Helical" evidence="2">
    <location>
        <begin position="69"/>
        <end position="90"/>
    </location>
</feature>
<feature type="transmembrane region" description="Helical" evidence="2">
    <location>
        <begin position="105"/>
        <end position="125"/>
    </location>
</feature>
<feature type="transmembrane region" description="Helical" evidence="2">
    <location>
        <begin position="170"/>
        <end position="190"/>
    </location>
</feature>
<feature type="transmembrane region" description="Helical" evidence="2">
    <location>
        <begin position="218"/>
        <end position="238"/>
    </location>
</feature>
<feature type="transmembrane region" description="Helical" evidence="2">
    <location>
        <begin position="280"/>
        <end position="300"/>
    </location>
</feature>
<feature type="transmembrane region" description="Helical" evidence="2">
    <location>
        <begin position="312"/>
        <end position="332"/>
    </location>
</feature>
<feature type="transmembrane region" description="Helical" evidence="2">
    <location>
        <begin position="339"/>
        <end position="358"/>
    </location>
</feature>
<feature type="binding site" description="axial binding residue" evidence="2">
    <location>
        <position position="75"/>
    </location>
    <ligand>
        <name>heme b</name>
        <dbReference type="ChEBI" id="CHEBI:60344"/>
        <label>b562</label>
    </ligand>
    <ligandPart>
        <name>Fe</name>
        <dbReference type="ChEBI" id="CHEBI:18248"/>
    </ligandPart>
</feature>
<feature type="binding site" description="axial binding residue" evidence="2">
    <location>
        <position position="89"/>
    </location>
    <ligand>
        <name>heme b</name>
        <dbReference type="ChEBI" id="CHEBI:60344"/>
        <label>b566</label>
    </ligand>
    <ligandPart>
        <name>Fe</name>
        <dbReference type="ChEBI" id="CHEBI:18248"/>
    </ligandPart>
</feature>
<feature type="binding site" description="axial binding residue" evidence="2">
    <location>
        <position position="174"/>
    </location>
    <ligand>
        <name>heme b</name>
        <dbReference type="ChEBI" id="CHEBI:60344"/>
        <label>b562</label>
    </ligand>
    <ligandPart>
        <name>Fe</name>
        <dbReference type="ChEBI" id="CHEBI:18248"/>
    </ligandPart>
</feature>
<feature type="binding site" description="axial binding residue" evidence="2">
    <location>
        <position position="188"/>
    </location>
    <ligand>
        <name>heme b</name>
        <dbReference type="ChEBI" id="CHEBI:60344"/>
        <label>b566</label>
    </ligand>
    <ligandPart>
        <name>Fe</name>
        <dbReference type="ChEBI" id="CHEBI:18248"/>
    </ligandPart>
</feature>
<feature type="binding site" evidence="2">
    <location>
        <position position="193"/>
    </location>
    <ligand>
        <name>a ubiquinone</name>
        <dbReference type="ChEBI" id="CHEBI:16389"/>
    </ligand>
</feature>
<keyword id="KW-0249">Electron transport</keyword>
<keyword id="KW-0349">Heme</keyword>
<keyword id="KW-0408">Iron</keyword>
<keyword id="KW-0472">Membrane</keyword>
<keyword id="KW-0479">Metal-binding</keyword>
<keyword id="KW-0496">Mitochondrion</keyword>
<keyword id="KW-0999">Mitochondrion inner membrane</keyword>
<keyword id="KW-0679">Respiratory chain</keyword>
<keyword id="KW-0812">Transmembrane</keyword>
<keyword id="KW-1133">Transmembrane helix</keyword>
<keyword id="KW-0813">Transport</keyword>
<keyword id="KW-0830">Ubiquinone</keyword>
<dbReference type="EMBL" id="U69843">
    <property type="protein sequence ID" value="AAC01877.1"/>
    <property type="molecule type" value="Genomic_DNA"/>
</dbReference>
<dbReference type="SMR" id="O48098"/>
<dbReference type="GO" id="GO:0005743">
    <property type="term" value="C:mitochondrial inner membrane"/>
    <property type="evidence" value="ECO:0007669"/>
    <property type="project" value="UniProtKB-SubCell"/>
</dbReference>
<dbReference type="GO" id="GO:0045275">
    <property type="term" value="C:respiratory chain complex III"/>
    <property type="evidence" value="ECO:0007669"/>
    <property type="project" value="InterPro"/>
</dbReference>
<dbReference type="GO" id="GO:0046872">
    <property type="term" value="F:metal ion binding"/>
    <property type="evidence" value="ECO:0007669"/>
    <property type="project" value="UniProtKB-KW"/>
</dbReference>
<dbReference type="GO" id="GO:0008121">
    <property type="term" value="F:ubiquinol-cytochrome-c reductase activity"/>
    <property type="evidence" value="ECO:0007669"/>
    <property type="project" value="InterPro"/>
</dbReference>
<dbReference type="GO" id="GO:0006122">
    <property type="term" value="P:mitochondrial electron transport, ubiquinol to cytochrome c"/>
    <property type="evidence" value="ECO:0007669"/>
    <property type="project" value="TreeGrafter"/>
</dbReference>
<dbReference type="CDD" id="cd00290">
    <property type="entry name" value="cytochrome_b_C"/>
    <property type="match status" value="1"/>
</dbReference>
<dbReference type="CDD" id="cd00284">
    <property type="entry name" value="Cytochrome_b_N"/>
    <property type="match status" value="1"/>
</dbReference>
<dbReference type="Gene3D" id="1.20.810.10">
    <property type="entry name" value="Cytochrome Bc1 Complex, Chain C"/>
    <property type="match status" value="1"/>
</dbReference>
<dbReference type="InterPro" id="IPR005798">
    <property type="entry name" value="Cyt_b/b6_C"/>
</dbReference>
<dbReference type="InterPro" id="IPR036150">
    <property type="entry name" value="Cyt_b/b6_C_sf"/>
</dbReference>
<dbReference type="InterPro" id="IPR005797">
    <property type="entry name" value="Cyt_b/b6_N"/>
</dbReference>
<dbReference type="InterPro" id="IPR027387">
    <property type="entry name" value="Cytb/b6-like_sf"/>
</dbReference>
<dbReference type="InterPro" id="IPR030689">
    <property type="entry name" value="Cytochrome_b"/>
</dbReference>
<dbReference type="InterPro" id="IPR048260">
    <property type="entry name" value="Cytochrome_b_C_euk/bac"/>
</dbReference>
<dbReference type="InterPro" id="IPR048259">
    <property type="entry name" value="Cytochrome_b_N_euk/bac"/>
</dbReference>
<dbReference type="InterPro" id="IPR016174">
    <property type="entry name" value="Di-haem_cyt_TM"/>
</dbReference>
<dbReference type="PANTHER" id="PTHR19271">
    <property type="entry name" value="CYTOCHROME B"/>
    <property type="match status" value="1"/>
</dbReference>
<dbReference type="PANTHER" id="PTHR19271:SF16">
    <property type="entry name" value="CYTOCHROME B"/>
    <property type="match status" value="1"/>
</dbReference>
<dbReference type="Pfam" id="PF00032">
    <property type="entry name" value="Cytochrom_B_C"/>
    <property type="match status" value="1"/>
</dbReference>
<dbReference type="Pfam" id="PF00033">
    <property type="entry name" value="Cytochrome_B"/>
    <property type="match status" value="1"/>
</dbReference>
<dbReference type="PIRSF" id="PIRSF038885">
    <property type="entry name" value="COB"/>
    <property type="match status" value="1"/>
</dbReference>
<dbReference type="SUPFAM" id="SSF81648">
    <property type="entry name" value="a domain/subunit of cytochrome bc1 complex (Ubiquinol-cytochrome c reductase)"/>
    <property type="match status" value="1"/>
</dbReference>
<dbReference type="SUPFAM" id="SSF81342">
    <property type="entry name" value="Transmembrane di-heme cytochromes"/>
    <property type="match status" value="1"/>
</dbReference>
<dbReference type="PROSITE" id="PS51003">
    <property type="entry name" value="CYTB_CTER"/>
    <property type="match status" value="1"/>
</dbReference>
<dbReference type="PROSITE" id="PS51002">
    <property type="entry name" value="CYTB_NTER"/>
    <property type="match status" value="1"/>
</dbReference>
<comment type="function">
    <text evidence="2">Component of the ubiquinol-cytochrome c reductase complex (complex III or cytochrome b-c1 complex) that is part of the mitochondrial respiratory chain. The b-c1 complex mediates electron transfer from ubiquinol to cytochrome c. Contributes to the generation of a proton gradient across the mitochondrial membrane that is then used for ATP synthesis.</text>
</comment>
<comment type="cofactor">
    <cofactor evidence="2">
        <name>heme b</name>
        <dbReference type="ChEBI" id="CHEBI:60344"/>
    </cofactor>
    <text evidence="2">Binds 2 heme b groups non-covalently.</text>
</comment>
<comment type="subunit">
    <text evidence="2">The cytochrome bc1 complex contains 3 respiratory subunits (MT-CYB, CYC1 and UQCRFS1), 2 core proteins (UQCRC1 and UQCRC2) and probably 6 low-molecular weight proteins.</text>
</comment>
<comment type="subcellular location">
    <subcellularLocation>
        <location evidence="2">Mitochondrion inner membrane</location>
        <topology evidence="2">Multi-pass membrane protein</topology>
    </subcellularLocation>
</comment>
<comment type="miscellaneous">
    <text evidence="1">Heme 1 (or BL or b562) is low-potential and absorbs at about 562 nm, and heme 2 (or BH or b566) is high-potential and absorbs at about 566 nm.</text>
</comment>
<comment type="similarity">
    <text evidence="3 4">Belongs to the cytochrome b family.</text>
</comment>
<comment type="caution">
    <text evidence="2">The full-length protein contains only eight transmembrane helices, not nine as predicted by bioinformatics tools.</text>
</comment>
<protein>
    <recommendedName>
        <fullName>Cytochrome b</fullName>
    </recommendedName>
    <alternativeName>
        <fullName>Complex III subunit 3</fullName>
    </alternativeName>
    <alternativeName>
        <fullName>Complex III subunit III</fullName>
    </alternativeName>
    <alternativeName>
        <fullName>Cytochrome b-c1 complex subunit 3</fullName>
    </alternativeName>
    <alternativeName>
        <fullName>Ubiquinol-cytochrome-c reductase complex cytochrome b subunit</fullName>
    </alternativeName>
</protein>
<sequence>MPHHYILTLFGLLPVATNISTWWNFGSMLLTCLALQVLTGFFLAVHYTANINLAFSSIIHITRDVPYGWMMQNLHAIGASMFFICIYIHIARGLYYGSYLNKETWMSGITLLITLMATAFFGYVLPWGQMSFWAATVITNLLTAVPYLGTSLTTWLWGGFAINDPTLTRFFALHFILPFEIISLSSLHIILLHEEGSSNPLGTNPDIDKIPFHPYHSHKDLLLLTLMILLLFITMSFFPDIFNDPDNFSKANPLVTPQHIKPEWYFLFAYGILRSIPNKLGGALALVTSIMILFTIPFTHTAHLRPMTFRPLSQLMFWTLVSTFITITWAATKPVEPPFIIISQATSLLYFTFFLSFPILGWTENKMMNTP</sequence>